<dbReference type="EC" id="4.2.1.3" evidence="3"/>
<dbReference type="EC" id="4.2.1.99" evidence="4"/>
<dbReference type="EMBL" id="BX248357">
    <property type="protein sequence ID" value="CAE49810.1"/>
    <property type="molecule type" value="Genomic_DNA"/>
</dbReference>
<dbReference type="RefSeq" id="WP_041627895.1">
    <property type="nucleotide sequence ID" value="NC_002935.2"/>
</dbReference>
<dbReference type="SMR" id="Q6NH63"/>
<dbReference type="STRING" id="257309.DIP1283"/>
<dbReference type="KEGG" id="cdi:DIP1283"/>
<dbReference type="PATRIC" id="fig|257309.4.peg.1262"/>
<dbReference type="HOGENOM" id="CLU_013476_2_1_11"/>
<dbReference type="UniPathway" id="UPA00223">
    <property type="reaction ID" value="UER00718"/>
</dbReference>
<dbReference type="UniPathway" id="UPA00946"/>
<dbReference type="Proteomes" id="UP000002198">
    <property type="component" value="Chromosome"/>
</dbReference>
<dbReference type="GO" id="GO:0047456">
    <property type="term" value="F:2-methylisocitrate dehydratase activity"/>
    <property type="evidence" value="ECO:0000250"/>
    <property type="project" value="UniProtKB"/>
</dbReference>
<dbReference type="GO" id="GO:0051539">
    <property type="term" value="F:4 iron, 4 sulfur cluster binding"/>
    <property type="evidence" value="ECO:0000250"/>
    <property type="project" value="UniProtKB"/>
</dbReference>
<dbReference type="GO" id="GO:0003994">
    <property type="term" value="F:aconitate hydratase activity"/>
    <property type="evidence" value="ECO:0000250"/>
    <property type="project" value="UniProtKB"/>
</dbReference>
<dbReference type="GO" id="GO:0046872">
    <property type="term" value="F:metal ion binding"/>
    <property type="evidence" value="ECO:0007669"/>
    <property type="project" value="UniProtKB-KW"/>
</dbReference>
<dbReference type="GO" id="GO:0003730">
    <property type="term" value="F:mRNA 3'-UTR binding"/>
    <property type="evidence" value="ECO:0000250"/>
    <property type="project" value="UniProtKB"/>
</dbReference>
<dbReference type="GO" id="GO:0003729">
    <property type="term" value="F:mRNA binding"/>
    <property type="evidence" value="ECO:0000250"/>
    <property type="project" value="UniProtKB"/>
</dbReference>
<dbReference type="GO" id="GO:0019679">
    <property type="term" value="P:propionate metabolic process, methylcitrate cycle"/>
    <property type="evidence" value="ECO:0000250"/>
    <property type="project" value="UniProtKB"/>
</dbReference>
<dbReference type="GO" id="GO:0006099">
    <property type="term" value="P:tricarboxylic acid cycle"/>
    <property type="evidence" value="ECO:0000250"/>
    <property type="project" value="UniProtKB"/>
</dbReference>
<dbReference type="CDD" id="cd01580">
    <property type="entry name" value="AcnA_IRP_Swivel"/>
    <property type="match status" value="1"/>
</dbReference>
<dbReference type="FunFam" id="3.20.19.10:FF:000001">
    <property type="entry name" value="Aconitate hydratase"/>
    <property type="match status" value="1"/>
</dbReference>
<dbReference type="FunFam" id="3.30.499.10:FF:000002">
    <property type="entry name" value="Aconitate hydratase"/>
    <property type="match status" value="1"/>
</dbReference>
<dbReference type="FunFam" id="3.30.499.10:FF:000009">
    <property type="entry name" value="Aconitate hydratase"/>
    <property type="match status" value="1"/>
</dbReference>
<dbReference type="Gene3D" id="6.10.190.10">
    <property type="match status" value="1"/>
</dbReference>
<dbReference type="Gene3D" id="3.30.499.10">
    <property type="entry name" value="Aconitase, domain 3"/>
    <property type="match status" value="2"/>
</dbReference>
<dbReference type="Gene3D" id="3.20.19.10">
    <property type="entry name" value="Aconitase, domain 4"/>
    <property type="match status" value="1"/>
</dbReference>
<dbReference type="InterPro" id="IPR044137">
    <property type="entry name" value="AcnA_IRP_Swivel"/>
</dbReference>
<dbReference type="InterPro" id="IPR015931">
    <property type="entry name" value="Acnase/IPM_dHydase_lsu_aba_1/3"/>
</dbReference>
<dbReference type="InterPro" id="IPR001030">
    <property type="entry name" value="Acoase/IPM_deHydtase_lsu_aba"/>
</dbReference>
<dbReference type="InterPro" id="IPR015928">
    <property type="entry name" value="Aconitase/3IPM_dehydase_swvl"/>
</dbReference>
<dbReference type="InterPro" id="IPR006249">
    <property type="entry name" value="Aconitase/IRP2"/>
</dbReference>
<dbReference type="InterPro" id="IPR018136">
    <property type="entry name" value="Aconitase_4Fe-4S_BS"/>
</dbReference>
<dbReference type="InterPro" id="IPR036008">
    <property type="entry name" value="Aconitase_4Fe-4S_dom"/>
</dbReference>
<dbReference type="InterPro" id="IPR000573">
    <property type="entry name" value="AconitaseA/IPMdHydase_ssu_swvl"/>
</dbReference>
<dbReference type="NCBIfam" id="TIGR01341">
    <property type="entry name" value="aconitase_1"/>
    <property type="match status" value="1"/>
</dbReference>
<dbReference type="NCBIfam" id="NF006757">
    <property type="entry name" value="PRK09277.1"/>
    <property type="match status" value="1"/>
</dbReference>
<dbReference type="NCBIfam" id="NF009520">
    <property type="entry name" value="PRK12881.1"/>
    <property type="match status" value="1"/>
</dbReference>
<dbReference type="PANTHER" id="PTHR11670">
    <property type="entry name" value="ACONITASE/IRON-RESPONSIVE ELEMENT FAMILY MEMBER"/>
    <property type="match status" value="1"/>
</dbReference>
<dbReference type="Pfam" id="PF00330">
    <property type="entry name" value="Aconitase"/>
    <property type="match status" value="1"/>
</dbReference>
<dbReference type="Pfam" id="PF00694">
    <property type="entry name" value="Aconitase_C"/>
    <property type="match status" value="1"/>
</dbReference>
<dbReference type="PRINTS" id="PR00415">
    <property type="entry name" value="ACONITASE"/>
</dbReference>
<dbReference type="SUPFAM" id="SSF53732">
    <property type="entry name" value="Aconitase iron-sulfur domain"/>
    <property type="match status" value="1"/>
</dbReference>
<dbReference type="SUPFAM" id="SSF52016">
    <property type="entry name" value="LeuD/IlvD-like"/>
    <property type="match status" value="1"/>
</dbReference>
<dbReference type="PROSITE" id="PS00450">
    <property type="entry name" value="ACONITASE_1"/>
    <property type="match status" value="1"/>
</dbReference>
<dbReference type="PROSITE" id="PS01244">
    <property type="entry name" value="ACONITASE_2"/>
    <property type="match status" value="1"/>
</dbReference>
<keyword id="KW-0408">Iron</keyword>
<keyword id="KW-0411">Iron-sulfur</keyword>
<keyword id="KW-0456">Lyase</keyword>
<keyword id="KW-0479">Metal-binding</keyword>
<keyword id="KW-1185">Reference proteome</keyword>
<keyword id="KW-0694">RNA-binding</keyword>
<keyword id="KW-0816">Tricarboxylic acid cycle</keyword>
<proteinExistence type="inferred from homology"/>
<feature type="chain" id="PRO_0000076658" description="Aconitate hydratase A">
    <location>
        <begin position="1"/>
        <end position="934"/>
    </location>
</feature>
<feature type="region of interest" description="Disordered" evidence="5">
    <location>
        <begin position="398"/>
        <end position="454"/>
    </location>
</feature>
<feature type="compositionally biased region" description="Basic and acidic residues" evidence="5">
    <location>
        <begin position="404"/>
        <end position="420"/>
    </location>
</feature>
<feature type="compositionally biased region" description="Low complexity" evidence="5">
    <location>
        <begin position="427"/>
        <end position="445"/>
    </location>
</feature>
<feature type="binding site" evidence="2">
    <location>
        <position position="473"/>
    </location>
    <ligand>
        <name>[4Fe-4S] cluster</name>
        <dbReference type="ChEBI" id="CHEBI:49883"/>
    </ligand>
</feature>
<feature type="binding site" evidence="2">
    <location>
        <position position="539"/>
    </location>
    <ligand>
        <name>[4Fe-4S] cluster</name>
        <dbReference type="ChEBI" id="CHEBI:49883"/>
    </ligand>
</feature>
<feature type="binding site" evidence="2">
    <location>
        <position position="542"/>
    </location>
    <ligand>
        <name>[4Fe-4S] cluster</name>
        <dbReference type="ChEBI" id="CHEBI:49883"/>
    </ligand>
</feature>
<evidence type="ECO:0000250" key="1">
    <source>
        <dbReference type="UniProtKB" id="P09339"/>
    </source>
</evidence>
<evidence type="ECO:0000250" key="2">
    <source>
        <dbReference type="UniProtKB" id="P36683"/>
    </source>
</evidence>
<evidence type="ECO:0000250" key="3">
    <source>
        <dbReference type="UniProtKB" id="Q8NQ98"/>
    </source>
</evidence>
<evidence type="ECO:0000250" key="4">
    <source>
        <dbReference type="UniProtKB" id="Q8ZP52"/>
    </source>
</evidence>
<evidence type="ECO:0000256" key="5">
    <source>
        <dbReference type="SAM" id="MobiDB-lite"/>
    </source>
</evidence>
<evidence type="ECO:0000305" key="6"/>
<comment type="function">
    <text evidence="1 3 4">Involved in the catabolism of short chain fatty acids (SCFA) via the tricarboxylic acid (TCA)(acetyl degradation route) and probably via the 2-methylcitrate cycle I (propionate degradation route). Catalyzes the reversible isomerization of citrate to isocitrate via cis-aconitate. Could catalyze the hydration of 2-methyl-cis-aconitate to yield (2R,3S)-2-methylisocitrate. The apo form of AcnA functions as a RNA-binding regulatory protein.</text>
</comment>
<comment type="catalytic activity">
    <reaction evidence="3">
        <text>citrate = D-threo-isocitrate</text>
        <dbReference type="Rhea" id="RHEA:10336"/>
        <dbReference type="ChEBI" id="CHEBI:15562"/>
        <dbReference type="ChEBI" id="CHEBI:16947"/>
        <dbReference type="EC" id="4.2.1.3"/>
    </reaction>
</comment>
<comment type="catalytic activity">
    <reaction evidence="4">
        <text>(2S,3R)-3-hydroxybutane-1,2,3-tricarboxylate = 2-methyl-cis-aconitate + H2O</text>
        <dbReference type="Rhea" id="RHEA:17941"/>
        <dbReference type="ChEBI" id="CHEBI:15377"/>
        <dbReference type="ChEBI" id="CHEBI:57429"/>
        <dbReference type="ChEBI" id="CHEBI:57872"/>
        <dbReference type="EC" id="4.2.1.99"/>
    </reaction>
</comment>
<comment type="cofactor">
    <cofactor evidence="3">
        <name>[4Fe-4S] cluster</name>
        <dbReference type="ChEBI" id="CHEBI:49883"/>
    </cofactor>
    <text evidence="3">Binds 1 [4Fe-4S] cluster per subunit.</text>
</comment>
<comment type="pathway">
    <text evidence="3">Carbohydrate metabolism; tricarboxylic acid cycle; isocitrate from oxaloacetate: step 2/2.</text>
</comment>
<comment type="pathway">
    <text evidence="3">Organic acid metabolism; propanoate degradation.</text>
</comment>
<comment type="subunit">
    <text evidence="3">Monomer.</text>
</comment>
<comment type="similarity">
    <text evidence="6">Belongs to the aconitase/IPM isomerase family.</text>
</comment>
<reference key="1">
    <citation type="journal article" date="2003" name="Nucleic Acids Res.">
        <title>The complete genome sequence and analysis of Corynebacterium diphtheriae NCTC13129.</title>
        <authorList>
            <person name="Cerdeno-Tarraga A.-M."/>
            <person name="Efstratiou A."/>
            <person name="Dover L.G."/>
            <person name="Holden M.T.G."/>
            <person name="Pallen M.J."/>
            <person name="Bentley S.D."/>
            <person name="Besra G.S."/>
            <person name="Churcher C.M."/>
            <person name="James K.D."/>
            <person name="De Zoysa A."/>
            <person name="Chillingworth T."/>
            <person name="Cronin A."/>
            <person name="Dowd L."/>
            <person name="Feltwell T."/>
            <person name="Hamlin N."/>
            <person name="Holroyd S."/>
            <person name="Jagels K."/>
            <person name="Moule S."/>
            <person name="Quail M.A."/>
            <person name="Rabbinowitsch E."/>
            <person name="Rutherford K.M."/>
            <person name="Thomson N.R."/>
            <person name="Unwin L."/>
            <person name="Whitehead S."/>
            <person name="Barrell B.G."/>
            <person name="Parkhill J."/>
        </authorList>
    </citation>
    <scope>NUCLEOTIDE SEQUENCE [LARGE SCALE GENOMIC DNA]</scope>
    <source>
        <strain>ATCC 700971 / NCTC 13129 / Biotype gravis</strain>
    </source>
</reference>
<accession>Q6NH63</accession>
<protein>
    <recommendedName>
        <fullName evidence="3">Aconitate hydratase A</fullName>
        <shortName evidence="3">ACN</shortName>
        <shortName evidence="3">Aconitase</shortName>
        <ecNumber evidence="3">4.2.1.3</ecNumber>
    </recommendedName>
    <alternativeName>
        <fullName evidence="4">(2R,3S)-2-methylisocitrate dehydratase</fullName>
    </alternativeName>
    <alternativeName>
        <fullName evidence="4">(2S,3R)-3-hydroxybutane-1,2,3-tricarboxylate dehydratase</fullName>
    </alternativeName>
    <alternativeName>
        <fullName evidence="1">Iron-responsive protein-like</fullName>
        <shortName evidence="1">IRP-like</shortName>
    </alternativeName>
    <alternativeName>
        <fullName evidence="4">Probable 2-methyl-cis-aconitate hydratase</fullName>
        <ecNumber evidence="4">4.2.1.99</ecNumber>
    </alternativeName>
    <alternativeName>
        <fullName evidence="1">RNA-binding protein</fullName>
    </alternativeName>
</protein>
<name>ACNA_CORDI</name>
<organism>
    <name type="scientific">Corynebacterium diphtheriae (strain ATCC 700971 / NCTC 13129 / Biotype gravis)</name>
    <dbReference type="NCBI Taxonomy" id="257309"/>
    <lineage>
        <taxon>Bacteria</taxon>
        <taxon>Bacillati</taxon>
        <taxon>Actinomycetota</taxon>
        <taxon>Actinomycetes</taxon>
        <taxon>Mycobacteriales</taxon>
        <taxon>Corynebacteriaceae</taxon>
        <taxon>Corynebacterium</taxon>
    </lineage>
</organism>
<gene>
    <name type="primary">acn</name>
    <name type="synonym">acnA</name>
    <name type="ordered locus">DIP1283</name>
</gene>
<sequence length="934" mass="101158">MTESKNSFNAKQTLEVGDKSYDYFALSAVKGMEKLPYSLKVLGENLLRTEDGANITADHINAIANWDPSAEPSIEIQFTPARVLMQDFTGVPCVVDLATMREAVKTLGGDPDKVNPLNPAEMVIDHSVIIEAFGSTLALAKNVEIEYERNEERYQFLRWGSKAFSNFRVVPPGTGIVHQVNIENLARVVFDNNGLAYPDTCIGTDSHTTMENGLGILGWGVGGIEAEAAMLGQPVSMLIPRVVGFKLTGEIPAGVTATDVVLTITEMLREHGVVQKFVEFYGNGVKSIPLANRATIGNMSPEFGSTCAIFPIDEETVKYMHLTGRSEEQVALVEAYAKAQGMWLEQDAPEAEYSEYLELDLSTVVPSIAGPKRPQDRILLTEAKEQFRKDLPDYCSAEPVDESLPAKRMDSEGAVQKEGEDVAGYNSSRAGHGESAAEGAAGRQSNPVVVSSPNGGEYTLDHGMVAIASITSCTNTSNPSVMIGAGLIARKAAAKGLKAKPWVKTICAPGSQVVDGYYKRADLWKDLEALGFYLSGFGCTTCIGNSGPLPEEISAAINENDLTATAVLSGNRNFEGRISPDVKMNYLVSPIMVIAYAIAGTMDFDFETQPLGQDIDGNDVFLKDIWPSTEEIEETIAGAISRELYEADYADVFKGDEQWQNLPTPEGKTFDWDEKSTYIRKAPYFDGMTMEPAPVSDIKGARVLAKLGDSVTTDHISPASSIKPGTPAAQYLDENGVARNDYNSLGSRRGNHEVMMRGTFANIRLQNQLVDIAGGYTRDFTKNGEQAFIFDACQNYKAAGIPLVVIAGKEYGTGSSRDWAAKGTNLLGVKAVITESFERIHRSNLIGMGVIPLQFPAGESHASLGLDGTETFDIEGIEELNNGVTPKTVHVTATKESGDQVEFDAVVRIDTPGEADYYRNGGILQYVLRNMINA</sequence>